<feature type="chain" id="PRO_0000099000" description="Tryptophan synthase beta chain">
    <location>
        <begin position="1"/>
        <end position="404"/>
    </location>
</feature>
<feature type="modified residue" description="N6-(pyridoxal phosphate)lysine" evidence="1">
    <location>
        <position position="94"/>
    </location>
</feature>
<accession>Q6GH33</accession>
<reference key="1">
    <citation type="journal article" date="2004" name="Proc. Natl. Acad. Sci. U.S.A.">
        <title>Complete genomes of two clinical Staphylococcus aureus strains: evidence for the rapid evolution of virulence and drug resistance.</title>
        <authorList>
            <person name="Holden M.T.G."/>
            <person name="Feil E.J."/>
            <person name="Lindsay J.A."/>
            <person name="Peacock S.J."/>
            <person name="Day N.P.J."/>
            <person name="Enright M.C."/>
            <person name="Foster T.J."/>
            <person name="Moore C.E."/>
            <person name="Hurst L."/>
            <person name="Atkin R."/>
            <person name="Barron A."/>
            <person name="Bason N."/>
            <person name="Bentley S.D."/>
            <person name="Chillingworth C."/>
            <person name="Chillingworth T."/>
            <person name="Churcher C."/>
            <person name="Clark L."/>
            <person name="Corton C."/>
            <person name="Cronin A."/>
            <person name="Doggett J."/>
            <person name="Dowd L."/>
            <person name="Feltwell T."/>
            <person name="Hance Z."/>
            <person name="Harris B."/>
            <person name="Hauser H."/>
            <person name="Holroyd S."/>
            <person name="Jagels K."/>
            <person name="James K.D."/>
            <person name="Lennard N."/>
            <person name="Line A."/>
            <person name="Mayes R."/>
            <person name="Moule S."/>
            <person name="Mungall K."/>
            <person name="Ormond D."/>
            <person name="Quail M.A."/>
            <person name="Rabbinowitsch E."/>
            <person name="Rutherford K.M."/>
            <person name="Sanders M."/>
            <person name="Sharp S."/>
            <person name="Simmonds M."/>
            <person name="Stevens K."/>
            <person name="Whitehead S."/>
            <person name="Barrell B.G."/>
            <person name="Spratt B.G."/>
            <person name="Parkhill J."/>
        </authorList>
    </citation>
    <scope>NUCLEOTIDE SEQUENCE [LARGE SCALE GENOMIC DNA]</scope>
    <source>
        <strain>MRSA252</strain>
    </source>
</reference>
<evidence type="ECO:0000255" key="1">
    <source>
        <dbReference type="HAMAP-Rule" id="MF_00133"/>
    </source>
</evidence>
<sequence>MNKQIQTEADELGFFGEYGGQYVPETLMPAIIELKKAYKEAKADPEFQRELEYYLSEYVGRATPLTYAASYTESLGGAKIYLKREDLNHTGAHKINNALGQALLAKRMGKKKLVAETGAGQHGVASATVAALFDMELVVFMGSEDIKRQQLNVFRMELLGAKVVAVEDGQGTLSDAVNKALQYWVSHVDDTHYLLGSALGPDPFPTIVRDFQSVIGKEIKSQILKKEGRLPDAIVACIGGGSNAIGTFYPFIKDDVALYGVEAAGQGEDTDKHALAIGKGSPGVLHGTKMYLIQDEGGQVQLAHSISAGLDYPGIGPEHSYYHDIGRVTFENASDTQAMNALINFTKHEGIIPAIESAHALSYVERLAPTMSKEDIIVVTISGRGDKDMETIRQYMAERGLAND</sequence>
<keyword id="KW-0028">Amino-acid biosynthesis</keyword>
<keyword id="KW-0057">Aromatic amino acid biosynthesis</keyword>
<keyword id="KW-0456">Lyase</keyword>
<keyword id="KW-0663">Pyridoxal phosphate</keyword>
<keyword id="KW-0822">Tryptophan biosynthesis</keyword>
<organism>
    <name type="scientific">Staphylococcus aureus (strain MRSA252)</name>
    <dbReference type="NCBI Taxonomy" id="282458"/>
    <lineage>
        <taxon>Bacteria</taxon>
        <taxon>Bacillati</taxon>
        <taxon>Bacillota</taxon>
        <taxon>Bacilli</taxon>
        <taxon>Bacillales</taxon>
        <taxon>Staphylococcaceae</taxon>
        <taxon>Staphylococcus</taxon>
    </lineage>
</organism>
<protein>
    <recommendedName>
        <fullName evidence="1">Tryptophan synthase beta chain</fullName>
        <ecNumber evidence="1">4.2.1.20</ecNumber>
    </recommendedName>
</protein>
<gene>
    <name evidence="1" type="primary">trpB</name>
    <name type="ordered locus">SAR1385</name>
</gene>
<dbReference type="EC" id="4.2.1.20" evidence="1"/>
<dbReference type="EMBL" id="BX571856">
    <property type="protein sequence ID" value="CAG40383.1"/>
    <property type="molecule type" value="Genomic_DNA"/>
</dbReference>
<dbReference type="RefSeq" id="WP_001041343.1">
    <property type="nucleotide sequence ID" value="NC_002952.2"/>
</dbReference>
<dbReference type="SMR" id="Q6GH33"/>
<dbReference type="KEGG" id="sar:SAR1385"/>
<dbReference type="HOGENOM" id="CLU_016734_3_1_9"/>
<dbReference type="UniPathway" id="UPA00035">
    <property type="reaction ID" value="UER00044"/>
</dbReference>
<dbReference type="Proteomes" id="UP000000596">
    <property type="component" value="Chromosome"/>
</dbReference>
<dbReference type="GO" id="GO:0005737">
    <property type="term" value="C:cytoplasm"/>
    <property type="evidence" value="ECO:0007669"/>
    <property type="project" value="TreeGrafter"/>
</dbReference>
<dbReference type="GO" id="GO:0004834">
    <property type="term" value="F:tryptophan synthase activity"/>
    <property type="evidence" value="ECO:0007669"/>
    <property type="project" value="UniProtKB-UniRule"/>
</dbReference>
<dbReference type="CDD" id="cd06446">
    <property type="entry name" value="Trp-synth_B"/>
    <property type="match status" value="1"/>
</dbReference>
<dbReference type="FunFam" id="3.40.50.1100:FF:000001">
    <property type="entry name" value="Tryptophan synthase beta chain"/>
    <property type="match status" value="1"/>
</dbReference>
<dbReference type="FunFam" id="3.40.50.1100:FF:000004">
    <property type="entry name" value="Tryptophan synthase beta chain"/>
    <property type="match status" value="1"/>
</dbReference>
<dbReference type="Gene3D" id="3.40.50.1100">
    <property type="match status" value="2"/>
</dbReference>
<dbReference type="HAMAP" id="MF_00133">
    <property type="entry name" value="Trp_synth_beta"/>
    <property type="match status" value="1"/>
</dbReference>
<dbReference type="InterPro" id="IPR006653">
    <property type="entry name" value="Trp_synth_b_CS"/>
</dbReference>
<dbReference type="InterPro" id="IPR006654">
    <property type="entry name" value="Trp_synth_beta"/>
</dbReference>
<dbReference type="InterPro" id="IPR023026">
    <property type="entry name" value="Trp_synth_beta/beta-like"/>
</dbReference>
<dbReference type="InterPro" id="IPR001926">
    <property type="entry name" value="TrpB-like_PALP"/>
</dbReference>
<dbReference type="InterPro" id="IPR036052">
    <property type="entry name" value="TrpB-like_PALP_sf"/>
</dbReference>
<dbReference type="NCBIfam" id="TIGR00263">
    <property type="entry name" value="trpB"/>
    <property type="match status" value="1"/>
</dbReference>
<dbReference type="PANTHER" id="PTHR48077:SF3">
    <property type="entry name" value="TRYPTOPHAN SYNTHASE"/>
    <property type="match status" value="1"/>
</dbReference>
<dbReference type="PANTHER" id="PTHR48077">
    <property type="entry name" value="TRYPTOPHAN SYNTHASE-RELATED"/>
    <property type="match status" value="1"/>
</dbReference>
<dbReference type="Pfam" id="PF00291">
    <property type="entry name" value="PALP"/>
    <property type="match status" value="1"/>
</dbReference>
<dbReference type="PIRSF" id="PIRSF001413">
    <property type="entry name" value="Trp_syn_beta"/>
    <property type="match status" value="1"/>
</dbReference>
<dbReference type="SUPFAM" id="SSF53686">
    <property type="entry name" value="Tryptophan synthase beta subunit-like PLP-dependent enzymes"/>
    <property type="match status" value="1"/>
</dbReference>
<dbReference type="PROSITE" id="PS00168">
    <property type="entry name" value="TRP_SYNTHASE_BETA"/>
    <property type="match status" value="1"/>
</dbReference>
<proteinExistence type="inferred from homology"/>
<comment type="function">
    <text evidence="1">The beta subunit is responsible for the synthesis of L-tryptophan from indole and L-serine.</text>
</comment>
<comment type="catalytic activity">
    <reaction evidence="1">
        <text>(1S,2R)-1-C-(indol-3-yl)glycerol 3-phosphate + L-serine = D-glyceraldehyde 3-phosphate + L-tryptophan + H2O</text>
        <dbReference type="Rhea" id="RHEA:10532"/>
        <dbReference type="ChEBI" id="CHEBI:15377"/>
        <dbReference type="ChEBI" id="CHEBI:33384"/>
        <dbReference type="ChEBI" id="CHEBI:57912"/>
        <dbReference type="ChEBI" id="CHEBI:58866"/>
        <dbReference type="ChEBI" id="CHEBI:59776"/>
        <dbReference type="EC" id="4.2.1.20"/>
    </reaction>
</comment>
<comment type="cofactor">
    <cofactor evidence="1">
        <name>pyridoxal 5'-phosphate</name>
        <dbReference type="ChEBI" id="CHEBI:597326"/>
    </cofactor>
</comment>
<comment type="pathway">
    <text evidence="1">Amino-acid biosynthesis; L-tryptophan biosynthesis; L-tryptophan from chorismate: step 5/5.</text>
</comment>
<comment type="subunit">
    <text evidence="1">Tetramer of two alpha and two beta chains.</text>
</comment>
<comment type="similarity">
    <text evidence="1">Belongs to the TrpB family.</text>
</comment>
<name>TRPB_STAAR</name>